<proteinExistence type="inferred from homology"/>
<gene>
    <name evidence="1" type="primary">argC</name>
    <name type="ordered locus">Ccur92_15850</name>
    <name type="ORF">CCV52592_1654</name>
</gene>
<protein>
    <recommendedName>
        <fullName evidence="1">N-acetyl-gamma-glutamyl-phosphate reductase</fullName>
        <shortName evidence="1">AGPR</shortName>
        <ecNumber evidence="1">1.2.1.38</ecNumber>
    </recommendedName>
    <alternativeName>
        <fullName evidence="1">N-acetyl-glutamate semialdehyde dehydrogenase</fullName>
        <shortName evidence="1">NAGSA dehydrogenase</shortName>
    </alternativeName>
</protein>
<organism>
    <name type="scientific">Campylobacter curvus (strain 525.92)</name>
    <dbReference type="NCBI Taxonomy" id="360105"/>
    <lineage>
        <taxon>Bacteria</taxon>
        <taxon>Pseudomonadati</taxon>
        <taxon>Campylobacterota</taxon>
        <taxon>Epsilonproteobacteria</taxon>
        <taxon>Campylobacterales</taxon>
        <taxon>Campylobacteraceae</taxon>
        <taxon>Campylobacter</taxon>
    </lineage>
</organism>
<accession>A7H097</accession>
<reference key="1">
    <citation type="submission" date="2007-07" db="EMBL/GenBank/DDBJ databases">
        <title>Genome sequence of Campylobacter curvus 525.92 isolated from human feces.</title>
        <authorList>
            <person name="Fouts D.E."/>
            <person name="Mongodin E.F."/>
            <person name="Puiu D."/>
            <person name="Sebastian Y."/>
            <person name="Miller W.G."/>
            <person name="Mandrell R.E."/>
            <person name="Lastovica A.J."/>
            <person name="Nelson K.E."/>
        </authorList>
    </citation>
    <scope>NUCLEOTIDE SEQUENCE [LARGE SCALE GENOMIC DNA]</scope>
    <source>
        <strain>525.92</strain>
    </source>
</reference>
<name>ARGC_CAMC5</name>
<comment type="function">
    <text evidence="1">Catalyzes the NADPH-dependent reduction of N-acetyl-5-glutamyl phosphate to yield N-acetyl-L-glutamate 5-semialdehyde.</text>
</comment>
<comment type="catalytic activity">
    <reaction evidence="1">
        <text>N-acetyl-L-glutamate 5-semialdehyde + phosphate + NADP(+) = N-acetyl-L-glutamyl 5-phosphate + NADPH + H(+)</text>
        <dbReference type="Rhea" id="RHEA:21588"/>
        <dbReference type="ChEBI" id="CHEBI:15378"/>
        <dbReference type="ChEBI" id="CHEBI:29123"/>
        <dbReference type="ChEBI" id="CHEBI:43474"/>
        <dbReference type="ChEBI" id="CHEBI:57783"/>
        <dbReference type="ChEBI" id="CHEBI:57936"/>
        <dbReference type="ChEBI" id="CHEBI:58349"/>
        <dbReference type="EC" id="1.2.1.38"/>
    </reaction>
</comment>
<comment type="pathway">
    <text evidence="1">Amino-acid biosynthesis; L-arginine biosynthesis; N(2)-acetyl-L-ornithine from L-glutamate: step 3/4.</text>
</comment>
<comment type="subcellular location">
    <subcellularLocation>
        <location evidence="1">Cytoplasm</location>
    </subcellularLocation>
</comment>
<comment type="similarity">
    <text evidence="1">Belongs to the NAGSA dehydrogenase family. Type 1 subfamily.</text>
</comment>
<keyword id="KW-0028">Amino-acid biosynthesis</keyword>
<keyword id="KW-0055">Arginine biosynthesis</keyword>
<keyword id="KW-0963">Cytoplasm</keyword>
<keyword id="KW-0521">NADP</keyword>
<keyword id="KW-0560">Oxidoreductase</keyword>
<keyword id="KW-1185">Reference proteome</keyword>
<sequence>MPAINVGIIGVSGYTGFELIRLLLAHPNFKMSYLAASSEAKIDEIFPSLRGVLDLDVHRADAKEAAKRCEVVFLALPHQEAMRYAKQLLSLGVKVVDLSADYRLSRELYEKNYCEHLDVQNLARAVYGLVELNRERIKGANLVANPGCYPTASILAVLPFLKFIDLDFGVVIDAKSGVSGAGKKLSASSHFVSVNENANAYNPINHRHADEIKFHLSNAAGSDISTLFVPHLLPITRGMLVSAYARLVKDIKPLEVLGEFYKNERFIRVRDEAVQIKNVAGTHFCDITAFAHEGKIFINSAIDNLLRGASSQAIANANLMCGLDENLALPMISQFC</sequence>
<feature type="chain" id="PRO_1000010984" description="N-acetyl-gamma-glutamyl-phosphate reductase">
    <location>
        <begin position="1"/>
        <end position="336"/>
    </location>
</feature>
<feature type="active site" evidence="1">
    <location>
        <position position="148"/>
    </location>
</feature>
<evidence type="ECO:0000255" key="1">
    <source>
        <dbReference type="HAMAP-Rule" id="MF_00150"/>
    </source>
</evidence>
<dbReference type="EC" id="1.2.1.38" evidence="1"/>
<dbReference type="EMBL" id="CP000767">
    <property type="protein sequence ID" value="EAU01030.1"/>
    <property type="molecule type" value="Genomic_DNA"/>
</dbReference>
<dbReference type="RefSeq" id="WP_011992678.1">
    <property type="nucleotide sequence ID" value="NC_009715.2"/>
</dbReference>
<dbReference type="SMR" id="A7H097"/>
<dbReference type="STRING" id="360105.CCV52592_1654"/>
<dbReference type="KEGG" id="ccv:CCV52592_1654"/>
<dbReference type="HOGENOM" id="CLU_006384_0_1_7"/>
<dbReference type="OrthoDB" id="9801289at2"/>
<dbReference type="UniPathway" id="UPA00068">
    <property type="reaction ID" value="UER00108"/>
</dbReference>
<dbReference type="Proteomes" id="UP000006380">
    <property type="component" value="Chromosome"/>
</dbReference>
<dbReference type="GO" id="GO:0005737">
    <property type="term" value="C:cytoplasm"/>
    <property type="evidence" value="ECO:0007669"/>
    <property type="project" value="UniProtKB-SubCell"/>
</dbReference>
<dbReference type="GO" id="GO:0003942">
    <property type="term" value="F:N-acetyl-gamma-glutamyl-phosphate reductase activity"/>
    <property type="evidence" value="ECO:0007669"/>
    <property type="project" value="UniProtKB-UniRule"/>
</dbReference>
<dbReference type="GO" id="GO:0051287">
    <property type="term" value="F:NAD binding"/>
    <property type="evidence" value="ECO:0007669"/>
    <property type="project" value="InterPro"/>
</dbReference>
<dbReference type="GO" id="GO:0070401">
    <property type="term" value="F:NADP+ binding"/>
    <property type="evidence" value="ECO:0007669"/>
    <property type="project" value="InterPro"/>
</dbReference>
<dbReference type="GO" id="GO:0006526">
    <property type="term" value="P:L-arginine biosynthetic process"/>
    <property type="evidence" value="ECO:0007669"/>
    <property type="project" value="UniProtKB-UniRule"/>
</dbReference>
<dbReference type="CDD" id="cd23934">
    <property type="entry name" value="AGPR_1_C"/>
    <property type="match status" value="1"/>
</dbReference>
<dbReference type="CDD" id="cd17895">
    <property type="entry name" value="AGPR_1_N"/>
    <property type="match status" value="1"/>
</dbReference>
<dbReference type="Gene3D" id="3.30.360.10">
    <property type="entry name" value="Dihydrodipicolinate Reductase, domain 2"/>
    <property type="match status" value="1"/>
</dbReference>
<dbReference type="Gene3D" id="3.40.50.720">
    <property type="entry name" value="NAD(P)-binding Rossmann-like Domain"/>
    <property type="match status" value="1"/>
</dbReference>
<dbReference type="HAMAP" id="MF_00150">
    <property type="entry name" value="ArgC_type1"/>
    <property type="match status" value="1"/>
</dbReference>
<dbReference type="InterPro" id="IPR023013">
    <property type="entry name" value="AGPR_AS"/>
</dbReference>
<dbReference type="InterPro" id="IPR000706">
    <property type="entry name" value="AGPR_type-1"/>
</dbReference>
<dbReference type="InterPro" id="IPR036291">
    <property type="entry name" value="NAD(P)-bd_dom_sf"/>
</dbReference>
<dbReference type="InterPro" id="IPR050085">
    <property type="entry name" value="NAGSA_dehydrogenase"/>
</dbReference>
<dbReference type="InterPro" id="IPR000534">
    <property type="entry name" value="Semialdehyde_DH_NAD-bd"/>
</dbReference>
<dbReference type="NCBIfam" id="TIGR01850">
    <property type="entry name" value="argC"/>
    <property type="match status" value="1"/>
</dbReference>
<dbReference type="PANTHER" id="PTHR32338:SF10">
    <property type="entry name" value="N-ACETYL-GAMMA-GLUTAMYL-PHOSPHATE REDUCTASE, CHLOROPLASTIC-RELATED"/>
    <property type="match status" value="1"/>
</dbReference>
<dbReference type="PANTHER" id="PTHR32338">
    <property type="entry name" value="N-ACETYL-GAMMA-GLUTAMYL-PHOSPHATE REDUCTASE, CHLOROPLASTIC-RELATED-RELATED"/>
    <property type="match status" value="1"/>
</dbReference>
<dbReference type="Pfam" id="PF01118">
    <property type="entry name" value="Semialdhyde_dh"/>
    <property type="match status" value="1"/>
</dbReference>
<dbReference type="Pfam" id="PF22698">
    <property type="entry name" value="Semialdhyde_dhC_1"/>
    <property type="match status" value="1"/>
</dbReference>
<dbReference type="SMART" id="SM00859">
    <property type="entry name" value="Semialdhyde_dh"/>
    <property type="match status" value="1"/>
</dbReference>
<dbReference type="SUPFAM" id="SSF55347">
    <property type="entry name" value="Glyceraldehyde-3-phosphate dehydrogenase-like, C-terminal domain"/>
    <property type="match status" value="1"/>
</dbReference>
<dbReference type="SUPFAM" id="SSF51735">
    <property type="entry name" value="NAD(P)-binding Rossmann-fold domains"/>
    <property type="match status" value="1"/>
</dbReference>
<dbReference type="PROSITE" id="PS01224">
    <property type="entry name" value="ARGC"/>
    <property type="match status" value="1"/>
</dbReference>